<comment type="subcellular location">
    <subcellularLocation>
        <location evidence="2">Membrane</location>
        <topology evidence="2">Single-pass membrane protein</topology>
    </subcellularLocation>
</comment>
<comment type="similarity">
    <text evidence="2">Belongs to the SMIM12 family.</text>
</comment>
<feature type="chain" id="PRO_0000414317" description="Small integral membrane protein 12">
    <location>
        <begin position="1"/>
        <end position="92"/>
    </location>
</feature>
<feature type="transmembrane region" description="Helical" evidence="1">
    <location>
        <begin position="12"/>
        <end position="34"/>
    </location>
</feature>
<keyword id="KW-0472">Membrane</keyword>
<keyword id="KW-1185">Reference proteome</keyword>
<keyword id="KW-0812">Transmembrane</keyword>
<keyword id="KW-1133">Transmembrane helix</keyword>
<protein>
    <recommendedName>
        <fullName>Small integral membrane protein 12</fullName>
    </recommendedName>
</protein>
<dbReference type="EMBL" id="AAFC03016374">
    <property type="status" value="NOT_ANNOTATED_CDS"/>
    <property type="molecule type" value="Genomic_DNA"/>
</dbReference>
<dbReference type="EMBL" id="BC142001">
    <property type="protein sequence ID" value="AAI42002.1"/>
    <property type="molecule type" value="mRNA"/>
</dbReference>
<dbReference type="EMBL" id="BC142175">
    <property type="protein sequence ID" value="AAI42176.1"/>
    <property type="molecule type" value="mRNA"/>
</dbReference>
<dbReference type="RefSeq" id="NP_001092420.1">
    <property type="nucleotide sequence ID" value="NM_001098950.1"/>
</dbReference>
<dbReference type="RefSeq" id="XP_005204772.1">
    <property type="nucleotide sequence ID" value="XM_005204715.3"/>
</dbReference>
<dbReference type="RefSeq" id="XP_005204773.1">
    <property type="nucleotide sequence ID" value="XM_005204716.3"/>
</dbReference>
<dbReference type="RefSeq" id="XP_059739628.1">
    <property type="nucleotide sequence ID" value="XM_059883645.1"/>
</dbReference>
<dbReference type="SMR" id="A5PJ82"/>
<dbReference type="FunCoup" id="A5PJ82">
    <property type="interactions" value="1372"/>
</dbReference>
<dbReference type="STRING" id="9913.ENSBTAP00000018920"/>
<dbReference type="PaxDb" id="9913-ENSBTAP00000018920"/>
<dbReference type="Ensembl" id="ENSBTAT00000112691.1">
    <property type="protein sequence ID" value="ENSBTAP00000098143.1"/>
    <property type="gene ID" value="ENSBTAG00000014235.5"/>
</dbReference>
<dbReference type="GeneID" id="512753"/>
<dbReference type="KEGG" id="bta:512753"/>
<dbReference type="CTD" id="113444"/>
<dbReference type="VEuPathDB" id="HostDB:ENSBTAG00000014235"/>
<dbReference type="VGNC" id="VGNC:35014">
    <property type="gene designation" value="SMIM12"/>
</dbReference>
<dbReference type="eggNOG" id="ENOG502S2AD">
    <property type="taxonomic scope" value="Eukaryota"/>
</dbReference>
<dbReference type="GeneTree" id="ENSGT00390000009435"/>
<dbReference type="HOGENOM" id="CLU_160787_0_0_1"/>
<dbReference type="InParanoid" id="A5PJ82"/>
<dbReference type="OMA" id="YHLEWFL"/>
<dbReference type="OrthoDB" id="10052506at2759"/>
<dbReference type="TreeFam" id="TF328614"/>
<dbReference type="Proteomes" id="UP000009136">
    <property type="component" value="Chromosome 3"/>
</dbReference>
<dbReference type="Bgee" id="ENSBTAG00000014235">
    <property type="expression patterns" value="Expressed in retina and 103 other cell types or tissues"/>
</dbReference>
<dbReference type="GO" id="GO:0016020">
    <property type="term" value="C:membrane"/>
    <property type="evidence" value="ECO:0007669"/>
    <property type="project" value="UniProtKB-SubCell"/>
</dbReference>
<dbReference type="InterPro" id="IPR031933">
    <property type="entry name" value="UPF0767"/>
</dbReference>
<dbReference type="PANTHER" id="PTHR28599">
    <property type="entry name" value="SMALL INTEGRAL MEMBRANE PROTEIN 12"/>
    <property type="match status" value="1"/>
</dbReference>
<dbReference type="PANTHER" id="PTHR28599:SF1">
    <property type="entry name" value="SMALL INTEGRAL MEMBRANE PROTEIN 12"/>
    <property type="match status" value="1"/>
</dbReference>
<dbReference type="Pfam" id="PF15990">
    <property type="entry name" value="UPF0767"/>
    <property type="match status" value="1"/>
</dbReference>
<gene>
    <name type="primary">SMIM12</name>
</gene>
<reference key="1">
    <citation type="journal article" date="2009" name="Science">
        <title>The genome sequence of taurine cattle: a window to ruminant biology and evolution.</title>
        <authorList>
            <consortium name="The bovine genome sequencing and analysis consortium"/>
        </authorList>
    </citation>
    <scope>NUCLEOTIDE SEQUENCE [LARGE SCALE GENOMIC DNA]</scope>
    <source>
        <strain>Hereford</strain>
    </source>
</reference>
<reference key="2">
    <citation type="submission" date="2007-06" db="EMBL/GenBank/DDBJ databases">
        <authorList>
            <consortium name="NIH - Mammalian Gene Collection (MGC) project"/>
        </authorList>
    </citation>
    <scope>NUCLEOTIDE SEQUENCE [LARGE SCALE MRNA]</scope>
    <source>
        <strain>Hereford</strain>
        <tissue>Hippocampus</tissue>
        <tissue>Hypothalamus</tissue>
    </source>
</reference>
<name>SIM12_BOVIN</name>
<proteinExistence type="inferred from homology"/>
<sequence length="92" mass="10779">MWPVLWTVVRTYAPYVTFPVAFVVGAVGYHLEWFIRGKEPQPVEEEKSISERREDRKLDELLGKDHTQVVSLKDKLEFAPKAVLNRNRPEKN</sequence>
<accession>A5PJ82</accession>
<evidence type="ECO:0000255" key="1"/>
<evidence type="ECO:0000305" key="2"/>
<organism>
    <name type="scientific">Bos taurus</name>
    <name type="common">Bovine</name>
    <dbReference type="NCBI Taxonomy" id="9913"/>
    <lineage>
        <taxon>Eukaryota</taxon>
        <taxon>Metazoa</taxon>
        <taxon>Chordata</taxon>
        <taxon>Craniata</taxon>
        <taxon>Vertebrata</taxon>
        <taxon>Euteleostomi</taxon>
        <taxon>Mammalia</taxon>
        <taxon>Eutheria</taxon>
        <taxon>Laurasiatheria</taxon>
        <taxon>Artiodactyla</taxon>
        <taxon>Ruminantia</taxon>
        <taxon>Pecora</taxon>
        <taxon>Bovidae</taxon>
        <taxon>Bovinae</taxon>
        <taxon>Bos</taxon>
    </lineage>
</organism>